<evidence type="ECO:0000255" key="1">
    <source>
        <dbReference type="HAMAP-Rule" id="MF_01320"/>
    </source>
</evidence>
<evidence type="ECO:0000256" key="2">
    <source>
        <dbReference type="SAM" id="MobiDB-lite"/>
    </source>
</evidence>
<evidence type="ECO:0000305" key="3"/>
<proteinExistence type="inferred from homology"/>
<organism>
    <name type="scientific">Staphylococcus epidermidis (strain ATCC 12228 / FDA PCI 1200)</name>
    <dbReference type="NCBI Taxonomy" id="176280"/>
    <lineage>
        <taxon>Bacteria</taxon>
        <taxon>Bacillati</taxon>
        <taxon>Bacillota</taxon>
        <taxon>Bacilli</taxon>
        <taxon>Bacillales</taxon>
        <taxon>Staphylococcaceae</taxon>
        <taxon>Staphylococcus</taxon>
    </lineage>
</organism>
<feature type="chain" id="PRO_0000129621" description="Large ribosomal subunit protein uL2">
    <location>
        <begin position="1"/>
        <end position="277"/>
    </location>
</feature>
<feature type="region of interest" description="Disordered" evidence="2">
    <location>
        <begin position="211"/>
        <end position="277"/>
    </location>
</feature>
<keyword id="KW-0687">Ribonucleoprotein</keyword>
<keyword id="KW-0689">Ribosomal protein</keyword>
<keyword id="KW-0694">RNA-binding</keyword>
<keyword id="KW-0699">rRNA-binding</keyword>
<sequence>MALKKYKPITNGRRNMTTLDFAEITKTTPEKSLLQPLPKRAGRNNQGKLTVRHHGGGHKRQYRVIDFKRNKDGIIAKVDSIQYDPNRSANIALLVYADGEKRYIIAPKGLQVGQTVESGAEADIKVGNALPLQNIPVGTVIHNIELKPGKGGQLARSAGASSQVLGKEGKYVLIRLRSGEVRMILSTCRATIGQVGNLQHELVNVGKAGRSRWKGVRPTVRGSVMNPNDHPHGGGEGRAPIGRPSPMSPWGKPTLGKKTRRGKKSSDKLIVRGRKKK</sequence>
<gene>
    <name evidence="1" type="primary">rplB</name>
    <name type="ordered locus">SE_1821</name>
</gene>
<reference key="1">
    <citation type="journal article" date="2003" name="Mol. Microbiol.">
        <title>Genome-based analysis of virulence genes in a non-biofilm-forming Staphylococcus epidermidis strain (ATCC 12228).</title>
        <authorList>
            <person name="Zhang Y.-Q."/>
            <person name="Ren S.-X."/>
            <person name="Li H.-L."/>
            <person name="Wang Y.-X."/>
            <person name="Fu G."/>
            <person name="Yang J."/>
            <person name="Qin Z.-Q."/>
            <person name="Miao Y.-G."/>
            <person name="Wang W.-Y."/>
            <person name="Chen R.-S."/>
            <person name="Shen Y."/>
            <person name="Chen Z."/>
            <person name="Yuan Z.-H."/>
            <person name="Zhao G.-P."/>
            <person name="Qu D."/>
            <person name="Danchin A."/>
            <person name="Wen Y.-M."/>
        </authorList>
    </citation>
    <scope>NUCLEOTIDE SEQUENCE [LARGE SCALE GENOMIC DNA]</scope>
    <source>
        <strain>ATCC 12228 / FDA PCI 1200</strain>
    </source>
</reference>
<protein>
    <recommendedName>
        <fullName evidence="1">Large ribosomal subunit protein uL2</fullName>
    </recommendedName>
    <alternativeName>
        <fullName evidence="3">50S ribosomal protein L2</fullName>
    </alternativeName>
</protein>
<name>RL2_STAES</name>
<comment type="function">
    <text evidence="1">One of the primary rRNA binding proteins. Required for association of the 30S and 50S subunits to form the 70S ribosome, for tRNA binding and peptide bond formation. It has been suggested to have peptidyltransferase activity; this is somewhat controversial. Makes several contacts with the 16S rRNA in the 70S ribosome.</text>
</comment>
<comment type="subunit">
    <text evidence="1">Part of the 50S ribosomal subunit. Forms a bridge to the 30S subunit in the 70S ribosome.</text>
</comment>
<comment type="similarity">
    <text evidence="1">Belongs to the universal ribosomal protein uL2 family.</text>
</comment>
<accession>Q8CRG3</accession>
<dbReference type="EMBL" id="AE015929">
    <property type="protein sequence ID" value="AAO05462.1"/>
    <property type="molecule type" value="Genomic_DNA"/>
</dbReference>
<dbReference type="RefSeq" id="NP_765376.1">
    <property type="nucleotide sequence ID" value="NC_004461.1"/>
</dbReference>
<dbReference type="RefSeq" id="WP_001829788.1">
    <property type="nucleotide sequence ID" value="NZ_WBME01000007.1"/>
</dbReference>
<dbReference type="SMR" id="Q8CRG3"/>
<dbReference type="GeneID" id="50018076"/>
<dbReference type="KEGG" id="sep:SE_1821"/>
<dbReference type="PATRIC" id="fig|176280.10.peg.1777"/>
<dbReference type="eggNOG" id="COG0090">
    <property type="taxonomic scope" value="Bacteria"/>
</dbReference>
<dbReference type="HOGENOM" id="CLU_036235_2_1_9"/>
<dbReference type="OrthoDB" id="9778722at2"/>
<dbReference type="Proteomes" id="UP000001411">
    <property type="component" value="Chromosome"/>
</dbReference>
<dbReference type="GO" id="GO:0015934">
    <property type="term" value="C:large ribosomal subunit"/>
    <property type="evidence" value="ECO:0007669"/>
    <property type="project" value="InterPro"/>
</dbReference>
<dbReference type="GO" id="GO:0019843">
    <property type="term" value="F:rRNA binding"/>
    <property type="evidence" value="ECO:0007669"/>
    <property type="project" value="UniProtKB-UniRule"/>
</dbReference>
<dbReference type="GO" id="GO:0003735">
    <property type="term" value="F:structural constituent of ribosome"/>
    <property type="evidence" value="ECO:0007669"/>
    <property type="project" value="InterPro"/>
</dbReference>
<dbReference type="GO" id="GO:0016740">
    <property type="term" value="F:transferase activity"/>
    <property type="evidence" value="ECO:0007669"/>
    <property type="project" value="InterPro"/>
</dbReference>
<dbReference type="GO" id="GO:0002181">
    <property type="term" value="P:cytoplasmic translation"/>
    <property type="evidence" value="ECO:0007669"/>
    <property type="project" value="TreeGrafter"/>
</dbReference>
<dbReference type="FunFam" id="2.30.30.30:FF:000001">
    <property type="entry name" value="50S ribosomal protein L2"/>
    <property type="match status" value="1"/>
</dbReference>
<dbReference type="FunFam" id="2.40.50.140:FF:000003">
    <property type="entry name" value="50S ribosomal protein L2"/>
    <property type="match status" value="1"/>
</dbReference>
<dbReference type="FunFam" id="4.10.950.10:FF:000001">
    <property type="entry name" value="50S ribosomal protein L2"/>
    <property type="match status" value="1"/>
</dbReference>
<dbReference type="Gene3D" id="2.30.30.30">
    <property type="match status" value="1"/>
</dbReference>
<dbReference type="Gene3D" id="2.40.50.140">
    <property type="entry name" value="Nucleic acid-binding proteins"/>
    <property type="match status" value="1"/>
</dbReference>
<dbReference type="Gene3D" id="4.10.950.10">
    <property type="entry name" value="Ribosomal protein L2, domain 3"/>
    <property type="match status" value="1"/>
</dbReference>
<dbReference type="HAMAP" id="MF_01320_B">
    <property type="entry name" value="Ribosomal_uL2_B"/>
    <property type="match status" value="1"/>
</dbReference>
<dbReference type="InterPro" id="IPR012340">
    <property type="entry name" value="NA-bd_OB-fold"/>
</dbReference>
<dbReference type="InterPro" id="IPR014722">
    <property type="entry name" value="Rib_uL2_dom2"/>
</dbReference>
<dbReference type="InterPro" id="IPR002171">
    <property type="entry name" value="Ribosomal_uL2"/>
</dbReference>
<dbReference type="InterPro" id="IPR005880">
    <property type="entry name" value="Ribosomal_uL2_bac/org-type"/>
</dbReference>
<dbReference type="InterPro" id="IPR022669">
    <property type="entry name" value="Ribosomal_uL2_C"/>
</dbReference>
<dbReference type="InterPro" id="IPR022671">
    <property type="entry name" value="Ribosomal_uL2_CS"/>
</dbReference>
<dbReference type="InterPro" id="IPR014726">
    <property type="entry name" value="Ribosomal_uL2_dom3"/>
</dbReference>
<dbReference type="InterPro" id="IPR022666">
    <property type="entry name" value="Ribosomal_uL2_RNA-bd_dom"/>
</dbReference>
<dbReference type="InterPro" id="IPR008991">
    <property type="entry name" value="Translation_prot_SH3-like_sf"/>
</dbReference>
<dbReference type="NCBIfam" id="TIGR01171">
    <property type="entry name" value="rplB_bact"/>
    <property type="match status" value="1"/>
</dbReference>
<dbReference type="PANTHER" id="PTHR13691:SF5">
    <property type="entry name" value="LARGE RIBOSOMAL SUBUNIT PROTEIN UL2M"/>
    <property type="match status" value="1"/>
</dbReference>
<dbReference type="PANTHER" id="PTHR13691">
    <property type="entry name" value="RIBOSOMAL PROTEIN L2"/>
    <property type="match status" value="1"/>
</dbReference>
<dbReference type="Pfam" id="PF00181">
    <property type="entry name" value="Ribosomal_L2"/>
    <property type="match status" value="1"/>
</dbReference>
<dbReference type="Pfam" id="PF03947">
    <property type="entry name" value="Ribosomal_L2_C"/>
    <property type="match status" value="1"/>
</dbReference>
<dbReference type="PIRSF" id="PIRSF002158">
    <property type="entry name" value="Ribosomal_L2"/>
    <property type="match status" value="1"/>
</dbReference>
<dbReference type="SMART" id="SM01383">
    <property type="entry name" value="Ribosomal_L2"/>
    <property type="match status" value="1"/>
</dbReference>
<dbReference type="SMART" id="SM01382">
    <property type="entry name" value="Ribosomal_L2_C"/>
    <property type="match status" value="1"/>
</dbReference>
<dbReference type="SUPFAM" id="SSF50249">
    <property type="entry name" value="Nucleic acid-binding proteins"/>
    <property type="match status" value="1"/>
</dbReference>
<dbReference type="SUPFAM" id="SSF50104">
    <property type="entry name" value="Translation proteins SH3-like domain"/>
    <property type="match status" value="1"/>
</dbReference>
<dbReference type="PROSITE" id="PS00467">
    <property type="entry name" value="RIBOSOMAL_L2"/>
    <property type="match status" value="1"/>
</dbReference>